<evidence type="ECO:0000255" key="1">
    <source>
        <dbReference type="HAMAP-Rule" id="MF_01277"/>
    </source>
</evidence>
<accession>Q7N3V8</accession>
<gene>
    <name evidence="1" type="primary">purR</name>
    <name type="ordered locus">plu2605</name>
</gene>
<proteinExistence type="inferred from homology"/>
<name>PURR_PHOLL</name>
<dbReference type="EMBL" id="BX571867">
    <property type="protein sequence ID" value="CAE14979.1"/>
    <property type="molecule type" value="Genomic_DNA"/>
</dbReference>
<dbReference type="RefSeq" id="WP_011146827.1">
    <property type="nucleotide sequence ID" value="NC_005126.1"/>
</dbReference>
<dbReference type="SMR" id="Q7N3V8"/>
<dbReference type="STRING" id="243265.plu2605"/>
<dbReference type="GeneID" id="48848864"/>
<dbReference type="KEGG" id="plu:plu2605"/>
<dbReference type="eggNOG" id="COG1609">
    <property type="taxonomic scope" value="Bacteria"/>
</dbReference>
<dbReference type="HOGENOM" id="CLU_037628_6_2_6"/>
<dbReference type="OrthoDB" id="9798934at2"/>
<dbReference type="UniPathway" id="UPA00488"/>
<dbReference type="Proteomes" id="UP000002514">
    <property type="component" value="Chromosome"/>
</dbReference>
<dbReference type="GO" id="GO:0003700">
    <property type="term" value="F:DNA-binding transcription factor activity"/>
    <property type="evidence" value="ECO:0007669"/>
    <property type="project" value="TreeGrafter"/>
</dbReference>
<dbReference type="GO" id="GO:0000976">
    <property type="term" value="F:transcription cis-regulatory region binding"/>
    <property type="evidence" value="ECO:0007669"/>
    <property type="project" value="TreeGrafter"/>
</dbReference>
<dbReference type="GO" id="GO:0045892">
    <property type="term" value="P:negative regulation of DNA-templated transcription"/>
    <property type="evidence" value="ECO:0007669"/>
    <property type="project" value="UniProtKB-UniRule"/>
</dbReference>
<dbReference type="GO" id="GO:0006164">
    <property type="term" value="P:purine nucleotide biosynthetic process"/>
    <property type="evidence" value="ECO:0007669"/>
    <property type="project" value="UniProtKB-UniPathway"/>
</dbReference>
<dbReference type="CDD" id="cd01392">
    <property type="entry name" value="HTH_LacI"/>
    <property type="match status" value="1"/>
</dbReference>
<dbReference type="CDD" id="cd06275">
    <property type="entry name" value="PBP1_PurR"/>
    <property type="match status" value="1"/>
</dbReference>
<dbReference type="FunFam" id="1.10.260.40:FF:000002">
    <property type="entry name" value="HTH-type transcriptional repressor PurR"/>
    <property type="match status" value="1"/>
</dbReference>
<dbReference type="FunFam" id="3.40.50.2300:FF:000045">
    <property type="entry name" value="HTH-type transcriptional repressor PurR"/>
    <property type="match status" value="1"/>
</dbReference>
<dbReference type="Gene3D" id="3.40.50.2300">
    <property type="match status" value="2"/>
</dbReference>
<dbReference type="Gene3D" id="1.10.260.40">
    <property type="entry name" value="lambda repressor-like DNA-binding domains"/>
    <property type="match status" value="1"/>
</dbReference>
<dbReference type="HAMAP" id="MF_01277">
    <property type="entry name" value="HTH_type_PurR"/>
    <property type="match status" value="1"/>
</dbReference>
<dbReference type="InterPro" id="IPR000843">
    <property type="entry name" value="HTH_LacI"/>
</dbReference>
<dbReference type="InterPro" id="IPR046335">
    <property type="entry name" value="LacI/GalR-like_sensor"/>
</dbReference>
<dbReference type="InterPro" id="IPR010982">
    <property type="entry name" value="Lambda_DNA-bd_dom_sf"/>
</dbReference>
<dbReference type="InterPro" id="IPR028082">
    <property type="entry name" value="Peripla_BP_I"/>
</dbReference>
<dbReference type="InterPro" id="IPR023588">
    <property type="entry name" value="Tscrpt_reg_HTH_PurR"/>
</dbReference>
<dbReference type="NCBIfam" id="NF007979">
    <property type="entry name" value="PRK10703.1"/>
    <property type="match status" value="1"/>
</dbReference>
<dbReference type="PANTHER" id="PTHR30146:SF148">
    <property type="entry name" value="HTH-TYPE TRANSCRIPTIONAL REPRESSOR PURR-RELATED"/>
    <property type="match status" value="1"/>
</dbReference>
<dbReference type="PANTHER" id="PTHR30146">
    <property type="entry name" value="LACI-RELATED TRANSCRIPTIONAL REPRESSOR"/>
    <property type="match status" value="1"/>
</dbReference>
<dbReference type="Pfam" id="PF00356">
    <property type="entry name" value="LacI"/>
    <property type="match status" value="1"/>
</dbReference>
<dbReference type="Pfam" id="PF13377">
    <property type="entry name" value="Peripla_BP_3"/>
    <property type="match status" value="1"/>
</dbReference>
<dbReference type="PRINTS" id="PR00036">
    <property type="entry name" value="HTHLACI"/>
</dbReference>
<dbReference type="SMART" id="SM00354">
    <property type="entry name" value="HTH_LACI"/>
    <property type="match status" value="1"/>
</dbReference>
<dbReference type="SUPFAM" id="SSF47413">
    <property type="entry name" value="lambda repressor-like DNA-binding domains"/>
    <property type="match status" value="1"/>
</dbReference>
<dbReference type="SUPFAM" id="SSF53822">
    <property type="entry name" value="Periplasmic binding protein-like I"/>
    <property type="match status" value="1"/>
</dbReference>
<dbReference type="PROSITE" id="PS00356">
    <property type="entry name" value="HTH_LACI_1"/>
    <property type="match status" value="1"/>
</dbReference>
<dbReference type="PROSITE" id="PS50932">
    <property type="entry name" value="HTH_LACI_2"/>
    <property type="match status" value="1"/>
</dbReference>
<protein>
    <recommendedName>
        <fullName evidence="1">HTH-type transcriptional repressor PurR</fullName>
    </recommendedName>
    <alternativeName>
        <fullName evidence="1">Pur regulon repressor</fullName>
    </alternativeName>
    <alternativeName>
        <fullName evidence="1">Purine nucleotide synthesis repressor</fullName>
    </alternativeName>
</protein>
<comment type="function">
    <text evidence="1">Is the main repressor of the genes involved in the de novo synthesis of purine nucleotides, regulating purB, purC, purEK, purF, purHD, purL, purMN and guaBA expression. PurR is allosterically activated to bind its cognate DNA by binding the purine corepressors, hypoxanthine or guanine, thereby effecting transcription repression.</text>
</comment>
<comment type="pathway">
    <text>Purine metabolism; purine nucleotide biosynthesis [regulation].</text>
</comment>
<comment type="subunit">
    <text evidence="1">Homodimer.</text>
</comment>
<comment type="domain">
    <text evidence="1">Consists of two structural and functional domains: an N-terminal DNA-binding domain, approximately the first 60 residues, and a larger C-terminal domain, approximately 280 residues, which imparts the function of corepressor binding and oligomerization.</text>
</comment>
<feature type="chain" id="PRO_0000279664" description="HTH-type transcriptional repressor PurR">
    <location>
        <begin position="1"/>
        <end position="341"/>
    </location>
</feature>
<feature type="domain" description="HTH lacI-type" evidence="1">
    <location>
        <begin position="2"/>
        <end position="56"/>
    </location>
</feature>
<feature type="DNA-binding region" description="H-T-H motif" evidence="1">
    <location>
        <begin position="4"/>
        <end position="23"/>
    </location>
</feature>
<feature type="DNA-binding region" evidence="1">
    <location>
        <begin position="48"/>
        <end position="56"/>
    </location>
</feature>
<feature type="binding site" evidence="1">
    <location>
        <position position="73"/>
    </location>
    <ligand>
        <name>hypoxanthine</name>
        <dbReference type="ChEBI" id="CHEBI:17368"/>
    </ligand>
</feature>
<feature type="binding site" evidence="1">
    <location>
        <position position="190"/>
    </location>
    <ligand>
        <name>hypoxanthine</name>
        <dbReference type="ChEBI" id="CHEBI:17368"/>
    </ligand>
</feature>
<feature type="binding site" evidence="1">
    <location>
        <position position="192"/>
    </location>
    <ligand>
        <name>hypoxanthine</name>
        <dbReference type="ChEBI" id="CHEBI:17368"/>
    </ligand>
</feature>
<feature type="binding site" evidence="1">
    <location>
        <position position="221"/>
    </location>
    <ligand>
        <name>hypoxanthine</name>
        <dbReference type="ChEBI" id="CHEBI:17368"/>
    </ligand>
</feature>
<feature type="binding site" evidence="1">
    <location>
        <position position="275"/>
    </location>
    <ligand>
        <name>hypoxanthine</name>
        <dbReference type="ChEBI" id="CHEBI:17368"/>
    </ligand>
</feature>
<reference key="1">
    <citation type="journal article" date="2003" name="Nat. Biotechnol.">
        <title>The genome sequence of the entomopathogenic bacterium Photorhabdus luminescens.</title>
        <authorList>
            <person name="Duchaud E."/>
            <person name="Rusniok C."/>
            <person name="Frangeul L."/>
            <person name="Buchrieser C."/>
            <person name="Givaudan A."/>
            <person name="Taourit S."/>
            <person name="Bocs S."/>
            <person name="Boursaux-Eude C."/>
            <person name="Chandler M."/>
            <person name="Charles J.-F."/>
            <person name="Dassa E."/>
            <person name="Derose R."/>
            <person name="Derzelle S."/>
            <person name="Freyssinet G."/>
            <person name="Gaudriault S."/>
            <person name="Medigue C."/>
            <person name="Lanois A."/>
            <person name="Powell K."/>
            <person name="Siguier P."/>
            <person name="Vincent R."/>
            <person name="Wingate V."/>
            <person name="Zouine M."/>
            <person name="Glaser P."/>
            <person name="Boemare N."/>
            <person name="Danchin A."/>
            <person name="Kunst F."/>
        </authorList>
    </citation>
    <scope>NUCLEOTIDE SEQUENCE [LARGE SCALE GENOMIC DNA]</scope>
    <source>
        <strain>DSM 15139 / CIP 105565 / TT01</strain>
    </source>
</reference>
<organism>
    <name type="scientific">Photorhabdus laumondii subsp. laumondii (strain DSM 15139 / CIP 105565 / TT01)</name>
    <name type="common">Photorhabdus luminescens subsp. laumondii</name>
    <dbReference type="NCBI Taxonomy" id="243265"/>
    <lineage>
        <taxon>Bacteria</taxon>
        <taxon>Pseudomonadati</taxon>
        <taxon>Pseudomonadota</taxon>
        <taxon>Gammaproteobacteria</taxon>
        <taxon>Enterobacterales</taxon>
        <taxon>Morganellaceae</taxon>
        <taxon>Photorhabdus</taxon>
    </lineage>
</organism>
<sequence>MATIKDVAKHAGVSTTTVSHVINKTRFVAEDTKAAVWAAIKALNYSPSAVARSLKVNHTKSIGLLATSSEAPYFAEIIESVENSCYSKGYTLILCNSHNNIDKQKAYLAMLAQKRVDGLLIMCSEYPEQLLGMLEDYRNIPMVVMDWGQARSDFTDTIIDNAFHGGYLAGRYLIERGHRDIGAIPGPLARNTGGGRHQGFLKALKEANIPIKEEWVIQGDFEPESGYKAMHQILNQKQRPTAVFCGGDVMAMGAICAADELGLRVPQDISVIGYDNIRNARYFSPALTTIHQPKERLGQMAFSMLLDRIINKREDAQTIEVHPRLVERRSVVDGPFVDYRR</sequence>
<keyword id="KW-0238">DNA-binding</keyword>
<keyword id="KW-0658">Purine biosynthesis</keyword>
<keyword id="KW-1185">Reference proteome</keyword>
<keyword id="KW-0678">Repressor</keyword>
<keyword id="KW-0804">Transcription</keyword>
<keyword id="KW-0805">Transcription regulation</keyword>